<name>SATT_MOUSE</name>
<evidence type="ECO:0000250" key="1">
    <source>
        <dbReference type="UniProtKB" id="P43007"/>
    </source>
</evidence>
<evidence type="ECO:0000255" key="2"/>
<evidence type="ECO:0000256" key="3">
    <source>
        <dbReference type="SAM" id="MobiDB-lite"/>
    </source>
</evidence>
<evidence type="ECO:0000269" key="4">
    <source>
    </source>
</evidence>
<evidence type="ECO:0000269" key="5">
    <source>
    </source>
</evidence>
<evidence type="ECO:0000305" key="6"/>
<evidence type="ECO:0007744" key="7">
    <source>
    </source>
</evidence>
<sequence length="532" mass="56062">MEKSGETNGYLDGTQAEPAAGPRTPETAMGKSQRCASFFRRHALVLLTVSGVLVGAGMGAALRGLQLTRTQITYLAFPGEMLLRMLRMIILPLVVCSLVSGAASLDASSLGRLGGIAVAYFGLTTLSASALAVALAFIIKPGAGAQTLQSSSLGLENSGPPPVSKETVDSFLDLLRNLFPSNLVVAAFTTSATDYTVVTHNTSSGNVTKEKIPVVTDVEGMNILGLVLFALVLGVALKKLGPEGEDLIRFFNSFNEATMVLVSWIMWYVPIGIMFLIGSKIVEMKDIVMLVTSLGKYIFASMLGHVIHGGIVLPLVYFAFTRKNPFTFLLGLLTPFATAFATCSSSATLPSMMKCIEENNGVDKRISRFILPIGATVNMDGAAIFQCVAAVFIAQLNNVDLNAGQIFTILVTATASSVGAAGVPAGGVLTIAIILEAIGLPTHDLSLILAVDWIVDRTTTVVNVEGDALGAGILNHLNQKVVKKGEQELQEVKVEAIPNSKSEEETSPLVTHQNPAGPVAIAPELESKESVL</sequence>
<reference key="1">
    <citation type="submission" date="1997-10" db="EMBL/GenBank/DDBJ databases">
        <authorList>
            <person name="Peng J.-B."/>
            <person name="Guo L.-H."/>
        </authorList>
    </citation>
    <scope>NUCLEOTIDE SEQUENCE [MRNA]</scope>
</reference>
<reference key="2">
    <citation type="journal article" date="2004" name="Genome Res.">
        <title>The status, quality, and expansion of the NIH full-length cDNA project: the Mammalian Gene Collection (MGC).</title>
        <authorList>
            <consortium name="The MGC Project Team"/>
        </authorList>
    </citation>
    <scope>NUCLEOTIDE SEQUENCE [LARGE SCALE MRNA]</scope>
    <source>
        <strain>C57BL/6J</strain>
        <tissue>Brain</tissue>
    </source>
</reference>
<reference key="3">
    <citation type="journal article" date="2009" name="Immunity">
        <title>The phagosomal proteome in interferon-gamma-activated macrophages.</title>
        <authorList>
            <person name="Trost M."/>
            <person name="English L."/>
            <person name="Lemieux S."/>
            <person name="Courcelles M."/>
            <person name="Desjardins M."/>
            <person name="Thibault P."/>
        </authorList>
    </citation>
    <scope>IDENTIFICATION BY MASS SPECTROMETRY [LARGE SCALE ANALYSIS]</scope>
</reference>
<reference key="4">
    <citation type="journal article" date="2009" name="Mol. Cell. Proteomics">
        <title>The mouse C2C12 myoblast cell surface N-linked glycoproteome: identification, glycosite occupancy, and membrane orientation.</title>
        <authorList>
            <person name="Gundry R.L."/>
            <person name="Raginski K."/>
            <person name="Tarasova Y."/>
            <person name="Tchernyshyov I."/>
            <person name="Bausch-Fluck D."/>
            <person name="Elliott S.T."/>
            <person name="Boheler K.R."/>
            <person name="Van Eyk J.E."/>
            <person name="Wollscheid B."/>
        </authorList>
    </citation>
    <scope>GLYCOSYLATION [LARGE SCALE ANALYSIS] AT ASN-201 AND ASN-206</scope>
    <source>
        <tissue>Myoblast</tissue>
    </source>
</reference>
<reference key="5">
    <citation type="journal article" date="2009" name="Nat. Biotechnol.">
        <title>Mass-spectrometric identification and relative quantification of N-linked cell surface glycoproteins.</title>
        <authorList>
            <person name="Wollscheid B."/>
            <person name="Bausch-Fluck D."/>
            <person name="Henderson C."/>
            <person name="O'Brien R."/>
            <person name="Bibel M."/>
            <person name="Schiess R."/>
            <person name="Aebersold R."/>
            <person name="Watts J.D."/>
        </authorList>
    </citation>
    <scope>GLYCOSYLATION [LARGE SCALE ANALYSIS] AT ASN-201 AND ASN-206</scope>
</reference>
<reference key="6">
    <citation type="journal article" date="2010" name="Cell">
        <title>A tissue-specific atlas of mouse protein phosphorylation and expression.</title>
        <authorList>
            <person name="Huttlin E.L."/>
            <person name="Jedrychowski M.P."/>
            <person name="Elias J.E."/>
            <person name="Goswami T."/>
            <person name="Rad R."/>
            <person name="Beausoleil S.A."/>
            <person name="Villen J."/>
            <person name="Haas W."/>
            <person name="Sowa M.E."/>
            <person name="Gygi S.P."/>
        </authorList>
    </citation>
    <scope>PHOSPHORYLATION [LARGE SCALE ANALYSIS] AT SER-527 AND SER-530</scope>
    <scope>IDENTIFICATION BY MASS SPECTROMETRY [LARGE SCALE ANALYSIS]</scope>
    <source>
        <tissue>Brain</tissue>
        <tissue>Kidney</tissue>
        <tissue>Liver</tissue>
        <tissue>Lung</tissue>
        <tissue>Pancreas</tissue>
    </source>
</reference>
<keyword id="KW-0007">Acetylation</keyword>
<keyword id="KW-0325">Glycoprotein</keyword>
<keyword id="KW-0472">Membrane</keyword>
<keyword id="KW-0597">Phosphoprotein</keyword>
<keyword id="KW-1185">Reference proteome</keyword>
<keyword id="KW-0769">Symport</keyword>
<keyword id="KW-0812">Transmembrane</keyword>
<keyword id="KW-1133">Transmembrane helix</keyword>
<keyword id="KW-0813">Transport</keyword>
<proteinExistence type="evidence at protein level"/>
<organism>
    <name type="scientific">Mus musculus</name>
    <name type="common">Mouse</name>
    <dbReference type="NCBI Taxonomy" id="10090"/>
    <lineage>
        <taxon>Eukaryota</taxon>
        <taxon>Metazoa</taxon>
        <taxon>Chordata</taxon>
        <taxon>Craniata</taxon>
        <taxon>Vertebrata</taxon>
        <taxon>Euteleostomi</taxon>
        <taxon>Mammalia</taxon>
        <taxon>Eutheria</taxon>
        <taxon>Euarchontoglires</taxon>
        <taxon>Glires</taxon>
        <taxon>Rodentia</taxon>
        <taxon>Myomorpha</taxon>
        <taxon>Muroidea</taxon>
        <taxon>Muridae</taxon>
        <taxon>Murinae</taxon>
        <taxon>Mus</taxon>
        <taxon>Mus</taxon>
    </lineage>
</organism>
<protein>
    <recommendedName>
        <fullName>Neutral amino acid transporter A</fullName>
    </recommendedName>
    <alternativeName>
        <fullName>Alanine/serine/cysteine/threonine transporter 1</fullName>
        <shortName>ASCT-1</shortName>
    </alternativeName>
    <alternativeName>
        <fullName>Solute carrier family 1 member 4</fullName>
    </alternativeName>
</protein>
<accession>O35874</accession>
<comment type="function">
    <text evidence="1">Sodium-dependent neutral amino-acid transporter that mediates transport of alanine, serine, cysteine, proline, hydroxyproline and threonine.</text>
</comment>
<comment type="catalytic activity">
    <reaction evidence="1">
        <text>L-threonine(in) + Na(+)(in) = L-threonine(out) + Na(+)(out)</text>
        <dbReference type="Rhea" id="RHEA:69999"/>
        <dbReference type="ChEBI" id="CHEBI:29101"/>
        <dbReference type="ChEBI" id="CHEBI:57926"/>
    </reaction>
</comment>
<comment type="catalytic activity">
    <reaction evidence="1">
        <text>L-serine(in) + Na(+)(in) = L-serine(out) + Na(+)(out)</text>
        <dbReference type="Rhea" id="RHEA:29575"/>
        <dbReference type="ChEBI" id="CHEBI:29101"/>
        <dbReference type="ChEBI" id="CHEBI:33384"/>
    </reaction>
</comment>
<comment type="catalytic activity">
    <reaction evidence="1">
        <text>L-cysteine(in) + Na(+)(in) = L-cysteine(out) + Na(+)(out)</text>
        <dbReference type="Rhea" id="RHEA:68232"/>
        <dbReference type="ChEBI" id="CHEBI:29101"/>
        <dbReference type="ChEBI" id="CHEBI:35235"/>
    </reaction>
</comment>
<comment type="catalytic activity">
    <reaction evidence="1">
        <text>L-alanine(in) + Na(+)(in) = L-alanine(out) + Na(+)(out)</text>
        <dbReference type="Rhea" id="RHEA:29283"/>
        <dbReference type="ChEBI" id="CHEBI:29101"/>
        <dbReference type="ChEBI" id="CHEBI:57972"/>
    </reaction>
</comment>
<comment type="catalytic activity">
    <reaction evidence="1">
        <text>L-proline(in) + Na(+)(in) = L-proline(out) + Na(+)(out)</text>
        <dbReference type="Rhea" id="RHEA:28967"/>
        <dbReference type="ChEBI" id="CHEBI:29101"/>
        <dbReference type="ChEBI" id="CHEBI:60039"/>
    </reaction>
</comment>
<comment type="catalytic activity">
    <reaction evidence="1">
        <text>4-hydroxy-L-proline(in) + Na(+)(in) = 4-hydroxy-L-proline(out) + Na(+)(out)</text>
        <dbReference type="Rhea" id="RHEA:70023"/>
        <dbReference type="ChEBI" id="CHEBI:29101"/>
        <dbReference type="ChEBI" id="CHEBI:58419"/>
    </reaction>
</comment>
<comment type="subcellular location">
    <subcellularLocation>
        <location evidence="1">Membrane</location>
        <topology evidence="2">Multi-pass membrane protein</topology>
    </subcellularLocation>
    <subcellularLocation>
        <location evidence="1">Melanosome</location>
    </subcellularLocation>
    <text evidence="1">Identified by mass spectrometry in melanosome fractions from stage I to stage IV.</text>
</comment>
<comment type="similarity">
    <text evidence="6">Belongs to the dicarboxylate/amino acid:cation symporter (DAACS) (TC 2.A.23) family. SLC1A4 subfamily.</text>
</comment>
<dbReference type="EMBL" id="U75215">
    <property type="protein sequence ID" value="AAB71740.1"/>
    <property type="molecule type" value="mRNA"/>
</dbReference>
<dbReference type="EMBL" id="BC052733">
    <property type="protein sequence ID" value="AAH52733.1"/>
    <property type="molecule type" value="mRNA"/>
</dbReference>
<dbReference type="CCDS" id="CCDS24457.1"/>
<dbReference type="RefSeq" id="NP_061349.3">
    <property type="nucleotide sequence ID" value="NM_018861.3"/>
</dbReference>
<dbReference type="SMR" id="O35874"/>
<dbReference type="BioGRID" id="207749">
    <property type="interactions" value="6"/>
</dbReference>
<dbReference type="FunCoup" id="O35874">
    <property type="interactions" value="106"/>
</dbReference>
<dbReference type="IntAct" id="O35874">
    <property type="interactions" value="1"/>
</dbReference>
<dbReference type="MINT" id="O35874"/>
<dbReference type="STRING" id="10090.ENSMUSP00000105223"/>
<dbReference type="GlyCosmos" id="O35874">
    <property type="glycosylation" value="2 sites, No reported glycans"/>
</dbReference>
<dbReference type="GlyGen" id="O35874">
    <property type="glycosylation" value="3 sites, 1 O-linked glycan (1 site)"/>
</dbReference>
<dbReference type="iPTMnet" id="O35874"/>
<dbReference type="PhosphoSitePlus" id="O35874"/>
<dbReference type="SwissPalm" id="O35874"/>
<dbReference type="PaxDb" id="10090-ENSMUSP00000105223"/>
<dbReference type="PeptideAtlas" id="O35874"/>
<dbReference type="ProteomicsDB" id="256922"/>
<dbReference type="Pumba" id="O35874"/>
<dbReference type="Antibodypedia" id="30840">
    <property type="antibodies" value="251 antibodies from 33 providers"/>
</dbReference>
<dbReference type="DNASU" id="55963"/>
<dbReference type="Ensembl" id="ENSMUST00000109594.8">
    <property type="protein sequence ID" value="ENSMUSP00000105223.2"/>
    <property type="gene ID" value="ENSMUSG00000020142.13"/>
</dbReference>
<dbReference type="GeneID" id="55963"/>
<dbReference type="KEGG" id="mmu:55963"/>
<dbReference type="UCSC" id="uc007idb.2">
    <property type="organism name" value="mouse"/>
</dbReference>
<dbReference type="AGR" id="MGI:2135601"/>
<dbReference type="CTD" id="6509"/>
<dbReference type="MGI" id="MGI:2135601">
    <property type="gene designation" value="Slc1a4"/>
</dbReference>
<dbReference type="VEuPathDB" id="HostDB:ENSMUSG00000020142"/>
<dbReference type="eggNOG" id="KOG3787">
    <property type="taxonomic scope" value="Eukaryota"/>
</dbReference>
<dbReference type="GeneTree" id="ENSGT00940000157081"/>
<dbReference type="HOGENOM" id="CLU_019375_3_3_1"/>
<dbReference type="InParanoid" id="O35874"/>
<dbReference type="OMA" id="GIMFVVH"/>
<dbReference type="OrthoDB" id="5877963at2759"/>
<dbReference type="PhylomeDB" id="O35874"/>
<dbReference type="TreeFam" id="TF315206"/>
<dbReference type="Reactome" id="R-MMU-352230">
    <property type="pathway name" value="Amino acid transport across the plasma membrane"/>
</dbReference>
<dbReference type="BioGRID-ORCS" id="55963">
    <property type="hits" value="4 hits in 80 CRISPR screens"/>
</dbReference>
<dbReference type="ChiTaRS" id="Slc1a4">
    <property type="organism name" value="mouse"/>
</dbReference>
<dbReference type="PRO" id="PR:O35874"/>
<dbReference type="Proteomes" id="UP000000589">
    <property type="component" value="Chromosome 11"/>
</dbReference>
<dbReference type="RNAct" id="O35874">
    <property type="molecule type" value="protein"/>
</dbReference>
<dbReference type="Bgee" id="ENSMUSG00000020142">
    <property type="expression patterns" value="Expressed in supraoptic nucleus and 252 other cell types or tissues"/>
</dbReference>
<dbReference type="ExpressionAtlas" id="O35874">
    <property type="expression patterns" value="baseline and differential"/>
</dbReference>
<dbReference type="GO" id="GO:0005813">
    <property type="term" value="C:centrosome"/>
    <property type="evidence" value="ECO:0007669"/>
    <property type="project" value="Ensembl"/>
</dbReference>
<dbReference type="GO" id="GO:0030425">
    <property type="term" value="C:dendrite"/>
    <property type="evidence" value="ECO:0007669"/>
    <property type="project" value="Ensembl"/>
</dbReference>
<dbReference type="GO" id="GO:0005882">
    <property type="term" value="C:intermediate filament"/>
    <property type="evidence" value="ECO:0000314"/>
    <property type="project" value="MGI"/>
</dbReference>
<dbReference type="GO" id="GO:0042470">
    <property type="term" value="C:melanosome"/>
    <property type="evidence" value="ECO:0007669"/>
    <property type="project" value="UniProtKB-SubCell"/>
</dbReference>
<dbReference type="GO" id="GO:0043025">
    <property type="term" value="C:neuronal cell body"/>
    <property type="evidence" value="ECO:0007669"/>
    <property type="project" value="Ensembl"/>
</dbReference>
<dbReference type="GO" id="GO:0005886">
    <property type="term" value="C:plasma membrane"/>
    <property type="evidence" value="ECO:0007669"/>
    <property type="project" value="Ensembl"/>
</dbReference>
<dbReference type="GO" id="GO:0005254">
    <property type="term" value="F:chloride channel activity"/>
    <property type="evidence" value="ECO:0007669"/>
    <property type="project" value="Ensembl"/>
</dbReference>
<dbReference type="GO" id="GO:0015180">
    <property type="term" value="F:L-alanine transmembrane transporter activity"/>
    <property type="evidence" value="ECO:0007669"/>
    <property type="project" value="Ensembl"/>
</dbReference>
<dbReference type="GO" id="GO:0015183">
    <property type="term" value="F:L-aspartate transmembrane transporter activity"/>
    <property type="evidence" value="ECO:0000314"/>
    <property type="project" value="ARUK-UCL"/>
</dbReference>
<dbReference type="GO" id="GO:0015184">
    <property type="term" value="F:L-cystine transmembrane transporter activity"/>
    <property type="evidence" value="ECO:0007669"/>
    <property type="project" value="Ensembl"/>
</dbReference>
<dbReference type="GO" id="GO:0034590">
    <property type="term" value="F:L-hydroxyproline transmembrane transporter activity"/>
    <property type="evidence" value="ECO:0007669"/>
    <property type="project" value="Ensembl"/>
</dbReference>
<dbReference type="GO" id="GO:0015193">
    <property type="term" value="F:L-proline transmembrane transporter activity"/>
    <property type="evidence" value="ECO:0007669"/>
    <property type="project" value="Ensembl"/>
</dbReference>
<dbReference type="GO" id="GO:0015194">
    <property type="term" value="F:L-serine transmembrane transporter activity"/>
    <property type="evidence" value="ECO:0000314"/>
    <property type="project" value="MGI"/>
</dbReference>
<dbReference type="GO" id="GO:0015195">
    <property type="term" value="F:L-threonine transmembrane transporter activity"/>
    <property type="evidence" value="ECO:0007669"/>
    <property type="project" value="Ensembl"/>
</dbReference>
<dbReference type="GO" id="GO:0015175">
    <property type="term" value="F:neutral L-amino acid transmembrane transporter activity"/>
    <property type="evidence" value="ECO:0000314"/>
    <property type="project" value="MGI"/>
</dbReference>
<dbReference type="GO" id="GO:0015293">
    <property type="term" value="F:symporter activity"/>
    <property type="evidence" value="ECO:0007669"/>
    <property type="project" value="UniProtKB-KW"/>
</dbReference>
<dbReference type="GO" id="GO:0050890">
    <property type="term" value="P:cognition"/>
    <property type="evidence" value="ECO:0007669"/>
    <property type="project" value="Ensembl"/>
</dbReference>
<dbReference type="GO" id="GO:1904273">
    <property type="term" value="P:L-alanine import across plasma membrane"/>
    <property type="evidence" value="ECO:0007669"/>
    <property type="project" value="Ensembl"/>
</dbReference>
<dbReference type="GO" id="GO:0140009">
    <property type="term" value="P:L-aspartate import across plasma membrane"/>
    <property type="evidence" value="ECO:0000314"/>
    <property type="project" value="ARUK-UCL"/>
</dbReference>
<dbReference type="GO" id="GO:1903812">
    <property type="term" value="P:L-serine import across plasma membrane"/>
    <property type="evidence" value="ECO:0007669"/>
    <property type="project" value="Ensembl"/>
</dbReference>
<dbReference type="GO" id="GO:0015824">
    <property type="term" value="P:proline transport"/>
    <property type="evidence" value="ECO:0007669"/>
    <property type="project" value="Ensembl"/>
</dbReference>
<dbReference type="GO" id="GO:0098718">
    <property type="term" value="P:serine import across plasma membrane"/>
    <property type="evidence" value="ECO:0000314"/>
    <property type="project" value="MGI"/>
</dbReference>
<dbReference type="FunFam" id="1.10.3860.10:FF:000005">
    <property type="entry name" value="Amino acid transporter"/>
    <property type="match status" value="1"/>
</dbReference>
<dbReference type="Gene3D" id="1.10.3860.10">
    <property type="entry name" value="Sodium:dicarboxylate symporter"/>
    <property type="match status" value="1"/>
</dbReference>
<dbReference type="InterPro" id="IPR050746">
    <property type="entry name" value="DAACS"/>
</dbReference>
<dbReference type="InterPro" id="IPR001991">
    <property type="entry name" value="Na-dicarboxylate_symporter"/>
</dbReference>
<dbReference type="InterPro" id="IPR018107">
    <property type="entry name" value="Na-dicarboxylate_symporter_CS"/>
</dbReference>
<dbReference type="InterPro" id="IPR036458">
    <property type="entry name" value="Na:dicarbo_symporter_sf"/>
</dbReference>
<dbReference type="PANTHER" id="PTHR11958:SF20">
    <property type="entry name" value="NEUTRAL AMINO ACID TRANSPORTER A"/>
    <property type="match status" value="1"/>
</dbReference>
<dbReference type="PANTHER" id="PTHR11958">
    <property type="entry name" value="SODIUM/DICARBOXYLATE SYMPORTER-RELATED"/>
    <property type="match status" value="1"/>
</dbReference>
<dbReference type="Pfam" id="PF00375">
    <property type="entry name" value="SDF"/>
    <property type="match status" value="1"/>
</dbReference>
<dbReference type="PRINTS" id="PR00173">
    <property type="entry name" value="EDTRNSPORT"/>
</dbReference>
<dbReference type="SUPFAM" id="SSF118215">
    <property type="entry name" value="Proton glutamate symport protein"/>
    <property type="match status" value="1"/>
</dbReference>
<dbReference type="PROSITE" id="PS00713">
    <property type="entry name" value="NA_DICARBOXYL_SYMP_1"/>
    <property type="match status" value="1"/>
</dbReference>
<dbReference type="PROSITE" id="PS00714">
    <property type="entry name" value="NA_DICARBOXYL_SYMP_2"/>
    <property type="match status" value="1"/>
</dbReference>
<feature type="chain" id="PRO_0000202080" description="Neutral amino acid transporter A">
    <location>
        <begin position="1"/>
        <end position="532"/>
    </location>
</feature>
<feature type="topological domain" description="Cytoplasmic" evidence="2">
    <location>
        <begin position="1"/>
        <end position="41"/>
    </location>
</feature>
<feature type="transmembrane region" description="Helical" evidence="2">
    <location>
        <begin position="42"/>
        <end position="62"/>
    </location>
</feature>
<feature type="transmembrane region" description="Helical" evidence="2">
    <location>
        <begin position="88"/>
        <end position="108"/>
    </location>
</feature>
<feature type="transmembrane region" description="Helical" evidence="2">
    <location>
        <begin position="119"/>
        <end position="139"/>
    </location>
</feature>
<feature type="topological domain" description="Extracellular" evidence="2">
    <location>
        <begin position="140"/>
        <end position="216"/>
    </location>
</feature>
<feature type="transmembrane region" description="Helical" evidence="2">
    <location>
        <begin position="217"/>
        <end position="237"/>
    </location>
</feature>
<feature type="transmembrane region" description="Helical" evidence="2">
    <location>
        <begin position="257"/>
        <end position="277"/>
    </location>
</feature>
<feature type="transmembrane region" description="Helical" evidence="2">
    <location>
        <begin position="298"/>
        <end position="318"/>
    </location>
</feature>
<feature type="transmembrane region" description="Helical" evidence="2">
    <location>
        <begin position="328"/>
        <end position="348"/>
    </location>
</feature>
<feature type="transmembrane region" description="Helical" evidence="2">
    <location>
        <begin position="373"/>
        <end position="393"/>
    </location>
</feature>
<feature type="transmembrane region" description="Helical" evidence="2">
    <location>
        <begin position="418"/>
        <end position="438"/>
    </location>
</feature>
<feature type="region of interest" description="Disordered" evidence="3">
    <location>
        <begin position="1"/>
        <end position="29"/>
    </location>
</feature>
<feature type="region of interest" description="Disordered" evidence="3">
    <location>
        <begin position="495"/>
        <end position="532"/>
    </location>
</feature>
<feature type="modified residue" description="N-acetylmethionine" evidence="1">
    <location>
        <position position="1"/>
    </location>
</feature>
<feature type="modified residue" description="Phosphoserine" evidence="1">
    <location>
        <position position="507"/>
    </location>
</feature>
<feature type="modified residue" description="Phosphoserine" evidence="7">
    <location>
        <position position="527"/>
    </location>
</feature>
<feature type="modified residue" description="Phosphoserine" evidence="7">
    <location>
        <position position="530"/>
    </location>
</feature>
<feature type="glycosylation site" description="N-linked (GlcNAc...) asparagine" evidence="4 5">
    <location>
        <position position="201"/>
    </location>
</feature>
<feature type="glycosylation site" description="N-linked (GlcNAc...) asparagine" evidence="4 5">
    <location>
        <position position="206"/>
    </location>
</feature>
<gene>
    <name type="primary">Slc1a4</name>
    <name type="synonym">Asct1</name>
    <name type="synonym">Satt</name>
</gene>